<keyword id="KW-0169">Cobalamin biosynthesis</keyword>
<keyword id="KW-0315">Glutamine amidotransferase</keyword>
<keyword id="KW-1185">Reference proteome</keyword>
<accession>Q9I467</accession>
<proteinExistence type="inferred from homology"/>
<comment type="function">
    <text evidence="1">Catalyzes amidations at positions B, D, E, and G on adenosylcobyrinic A,C-diamide. NH(2) groups are provided by glutamine, and one molecule of ATP is hydrogenolyzed for each amidation.</text>
</comment>
<comment type="pathway">
    <text evidence="1">Cofactor biosynthesis; adenosylcobalamin biosynthesis.</text>
</comment>
<comment type="similarity">
    <text evidence="1">Belongs to the CobB/CobQ family. CobQ subfamily.</text>
</comment>
<dbReference type="EMBL" id="AE004091">
    <property type="protein sequence ID" value="AAG04666.1"/>
    <property type="molecule type" value="Genomic_DNA"/>
</dbReference>
<dbReference type="PIR" id="C83486">
    <property type="entry name" value="C83486"/>
</dbReference>
<dbReference type="RefSeq" id="NP_249968.1">
    <property type="nucleotide sequence ID" value="NC_002516.2"/>
</dbReference>
<dbReference type="RefSeq" id="WP_003112353.1">
    <property type="nucleotide sequence ID" value="NZ_QZGE01000005.1"/>
</dbReference>
<dbReference type="SMR" id="Q9I467"/>
<dbReference type="STRING" id="208964.PA1277"/>
<dbReference type="PaxDb" id="208964-PA1277"/>
<dbReference type="GeneID" id="881421"/>
<dbReference type="KEGG" id="pae:PA1277"/>
<dbReference type="PATRIC" id="fig|208964.12.peg.1327"/>
<dbReference type="PseudoCAP" id="PA1277"/>
<dbReference type="HOGENOM" id="CLU_019250_2_2_6"/>
<dbReference type="InParanoid" id="Q9I467"/>
<dbReference type="OrthoDB" id="9808302at2"/>
<dbReference type="PhylomeDB" id="Q9I467"/>
<dbReference type="BioCyc" id="PAER208964:G1FZ6-1302-MONOMER"/>
<dbReference type="UniPathway" id="UPA00148"/>
<dbReference type="Proteomes" id="UP000002438">
    <property type="component" value="Chromosome"/>
</dbReference>
<dbReference type="GO" id="GO:0015420">
    <property type="term" value="F:ABC-type vitamin B12 transporter activity"/>
    <property type="evidence" value="ECO:0007669"/>
    <property type="project" value="UniProtKB-UniRule"/>
</dbReference>
<dbReference type="GO" id="GO:0003824">
    <property type="term" value="F:catalytic activity"/>
    <property type="evidence" value="ECO:0007669"/>
    <property type="project" value="InterPro"/>
</dbReference>
<dbReference type="GO" id="GO:0009236">
    <property type="term" value="P:cobalamin biosynthetic process"/>
    <property type="evidence" value="ECO:0007669"/>
    <property type="project" value="UniProtKB-UniRule"/>
</dbReference>
<dbReference type="CDD" id="cd05389">
    <property type="entry name" value="CobQ_N"/>
    <property type="match status" value="1"/>
</dbReference>
<dbReference type="CDD" id="cd01750">
    <property type="entry name" value="GATase1_CobQ"/>
    <property type="match status" value="1"/>
</dbReference>
<dbReference type="Gene3D" id="3.40.50.880">
    <property type="match status" value="1"/>
</dbReference>
<dbReference type="Gene3D" id="3.40.50.300">
    <property type="entry name" value="P-loop containing nucleotide triphosphate hydrolases"/>
    <property type="match status" value="1"/>
</dbReference>
<dbReference type="HAMAP" id="MF_00028">
    <property type="entry name" value="CobQ"/>
    <property type="match status" value="1"/>
</dbReference>
<dbReference type="InterPro" id="IPR029062">
    <property type="entry name" value="Class_I_gatase-like"/>
</dbReference>
<dbReference type="InterPro" id="IPR002586">
    <property type="entry name" value="CobQ/CobB/MinD/ParA_Nub-bd_dom"/>
</dbReference>
<dbReference type="InterPro" id="IPR033949">
    <property type="entry name" value="CobQ_GATase1"/>
</dbReference>
<dbReference type="InterPro" id="IPR047045">
    <property type="entry name" value="CobQ_N"/>
</dbReference>
<dbReference type="InterPro" id="IPR004459">
    <property type="entry name" value="CobQ_synth"/>
</dbReference>
<dbReference type="InterPro" id="IPR011698">
    <property type="entry name" value="GATase_3"/>
</dbReference>
<dbReference type="InterPro" id="IPR027417">
    <property type="entry name" value="P-loop_NTPase"/>
</dbReference>
<dbReference type="NCBIfam" id="TIGR00313">
    <property type="entry name" value="cobQ"/>
    <property type="match status" value="1"/>
</dbReference>
<dbReference type="NCBIfam" id="NF001989">
    <property type="entry name" value="PRK00784.1"/>
    <property type="match status" value="1"/>
</dbReference>
<dbReference type="PANTHER" id="PTHR21343:SF1">
    <property type="entry name" value="COBYRIC ACID SYNTHASE"/>
    <property type="match status" value="1"/>
</dbReference>
<dbReference type="PANTHER" id="PTHR21343">
    <property type="entry name" value="DETHIOBIOTIN SYNTHETASE"/>
    <property type="match status" value="1"/>
</dbReference>
<dbReference type="Pfam" id="PF01656">
    <property type="entry name" value="CbiA"/>
    <property type="match status" value="1"/>
</dbReference>
<dbReference type="Pfam" id="PF07685">
    <property type="entry name" value="GATase_3"/>
    <property type="match status" value="1"/>
</dbReference>
<dbReference type="SUPFAM" id="SSF52317">
    <property type="entry name" value="Class I glutamine amidotransferase-like"/>
    <property type="match status" value="1"/>
</dbReference>
<dbReference type="SUPFAM" id="SSF52540">
    <property type="entry name" value="P-loop containing nucleoside triphosphate hydrolases"/>
    <property type="match status" value="1"/>
</dbReference>
<dbReference type="PROSITE" id="PS51274">
    <property type="entry name" value="GATASE_COBBQ"/>
    <property type="match status" value="1"/>
</dbReference>
<organism>
    <name type="scientific">Pseudomonas aeruginosa (strain ATCC 15692 / DSM 22644 / CIP 104116 / JCM 14847 / LMG 12228 / 1C / PRS 101 / PAO1)</name>
    <dbReference type="NCBI Taxonomy" id="208964"/>
    <lineage>
        <taxon>Bacteria</taxon>
        <taxon>Pseudomonadati</taxon>
        <taxon>Pseudomonadota</taxon>
        <taxon>Gammaproteobacteria</taxon>
        <taxon>Pseudomonadales</taxon>
        <taxon>Pseudomonadaceae</taxon>
        <taxon>Pseudomonas</taxon>
    </lineage>
</organism>
<protein>
    <recommendedName>
        <fullName evidence="1">Cobyric acid synthase</fullName>
    </recommendedName>
</protein>
<gene>
    <name evidence="1" type="primary">cobQ</name>
    <name type="ordered locus">PA1277</name>
</gene>
<feature type="chain" id="PRO_0000141320" description="Cobyric acid synthase">
    <location>
        <begin position="1"/>
        <end position="490"/>
    </location>
</feature>
<feature type="domain" description="GATase cobBQ-type" evidence="1">
    <location>
        <begin position="252"/>
        <end position="439"/>
    </location>
</feature>
<feature type="active site" description="Nucleophile" evidence="1">
    <location>
        <position position="333"/>
    </location>
</feature>
<feature type="active site" evidence="1">
    <location>
        <position position="431"/>
    </location>
</feature>
<reference key="1">
    <citation type="journal article" date="2000" name="Nature">
        <title>Complete genome sequence of Pseudomonas aeruginosa PAO1, an opportunistic pathogen.</title>
        <authorList>
            <person name="Stover C.K."/>
            <person name="Pham X.-Q.T."/>
            <person name="Erwin A.L."/>
            <person name="Mizoguchi S.D."/>
            <person name="Warrener P."/>
            <person name="Hickey M.J."/>
            <person name="Brinkman F.S.L."/>
            <person name="Hufnagle W.O."/>
            <person name="Kowalik D.J."/>
            <person name="Lagrou M."/>
            <person name="Garber R.L."/>
            <person name="Goltry L."/>
            <person name="Tolentino E."/>
            <person name="Westbrock-Wadman S."/>
            <person name="Yuan Y."/>
            <person name="Brody L.L."/>
            <person name="Coulter S.N."/>
            <person name="Folger K.R."/>
            <person name="Kas A."/>
            <person name="Larbig K."/>
            <person name="Lim R.M."/>
            <person name="Smith K.A."/>
            <person name="Spencer D.H."/>
            <person name="Wong G.K.-S."/>
            <person name="Wu Z."/>
            <person name="Paulsen I.T."/>
            <person name="Reizer J."/>
            <person name="Saier M.H. Jr."/>
            <person name="Hancock R.E.W."/>
            <person name="Lory S."/>
            <person name="Olson M.V."/>
        </authorList>
    </citation>
    <scope>NUCLEOTIDE SEQUENCE [LARGE SCALE GENOMIC DNA]</scope>
    <source>
        <strain>ATCC 15692 / DSM 22644 / CIP 104116 / JCM 14847 / LMG 12228 / 1C / PRS 101 / PAO1</strain>
    </source>
</reference>
<sequence length="490" mass="52372">MSDRGRTLMVQGTTSDAGKSTLVTALCRWLARRGVAVVPFKPQNMALNSAVTADGGEIGRAQAVQAQACRLAPHTDMNPVLLKPNTDIGAQVIIHGRAVTSMDAAAYHDYKRVAMEAVLASHGRLAAAYRVVMVEGAGSPAEINLRANDIANMGFAEAVDCPVILVADIDRGGVFAHLVGTLELLSDSERERVKGFVINRFRGDIALLQPGLDWLEARTGKPVLGVLPYVSDLHLEAEDAIDTRQAAKVGPRLKVVVPVLPRISNHTDFDPLRLHPQVELSFVGPGQALPSADLIVLPGSKSVRADLAALRERGWDEAILRHLRYGGRLLGICGGLQMLGERLHDPLGLEGAAGSSAGLGLLALETTLEADKQLRNVQGRLSLEDAPLSGYEIHAGVTRGEALARPAVVLDDGRADGARSVDGNVMGTYLHGLFESTAACSALLRWAGLREVQAVDYQALRERDIERLADLVERHLDTGRLLALCGEPHA</sequence>
<name>COBQ_PSEAE</name>
<evidence type="ECO:0000255" key="1">
    <source>
        <dbReference type="HAMAP-Rule" id="MF_00028"/>
    </source>
</evidence>